<sequence length="200" mass="22767">MIINQSEFSVSAVKASQYPEGGLDEIALAGRSNVGKSSFINTLLQRKNLARTSSSPGKTQTLNFYRVDSDQADFYLVDVPGYGYAKVSKKQREEFGEMIQDYLETRAYLKGLILMIDGRHEPTVDDIAMYDYAQYLNLPILLVATKMDKIKKNAFNKTEAAFRKHLNLNKDNVTFLPFSSVTKLNVDQVKDWIQARLYEE</sequence>
<evidence type="ECO:0000255" key="1">
    <source>
        <dbReference type="HAMAP-Rule" id="MF_00321"/>
    </source>
</evidence>
<accession>Q1GAP7</accession>
<reference key="1">
    <citation type="journal article" date="2006" name="Proc. Natl. Acad. Sci. U.S.A.">
        <title>The complete genome sequence of Lactobacillus bulgaricus reveals extensive and ongoing reductive evolution.</title>
        <authorList>
            <person name="van de Guchte M."/>
            <person name="Penaud S."/>
            <person name="Grimaldi C."/>
            <person name="Barbe V."/>
            <person name="Bryson K."/>
            <person name="Nicolas P."/>
            <person name="Robert C."/>
            <person name="Oztas S."/>
            <person name="Mangenot S."/>
            <person name="Couloux A."/>
            <person name="Loux V."/>
            <person name="Dervyn R."/>
            <person name="Bossy R."/>
            <person name="Bolotin A."/>
            <person name="Batto J.-M."/>
            <person name="Walunas T."/>
            <person name="Gibrat J.-F."/>
            <person name="Bessieres P."/>
            <person name="Weissenbach J."/>
            <person name="Ehrlich S.D."/>
            <person name="Maguin E."/>
        </authorList>
    </citation>
    <scope>NUCLEOTIDE SEQUENCE [LARGE SCALE GENOMIC DNA]</scope>
    <source>
        <strain>ATCC 11842 / DSM 20081 / BCRC 10696 / JCM 1002 / NBRC 13953 / NCIMB 11778 / NCTC 12712 / WDCM 00102 / Lb 14</strain>
    </source>
</reference>
<organism>
    <name type="scientific">Lactobacillus delbrueckii subsp. bulgaricus (strain ATCC 11842 / DSM 20081 / BCRC 10696 / JCM 1002 / NBRC 13953 / NCIMB 11778 / NCTC 12712 / WDCM 00102 / Lb 14)</name>
    <dbReference type="NCBI Taxonomy" id="390333"/>
    <lineage>
        <taxon>Bacteria</taxon>
        <taxon>Bacillati</taxon>
        <taxon>Bacillota</taxon>
        <taxon>Bacilli</taxon>
        <taxon>Lactobacillales</taxon>
        <taxon>Lactobacillaceae</taxon>
        <taxon>Lactobacillus</taxon>
    </lineage>
</organism>
<dbReference type="EMBL" id="CR954253">
    <property type="protein sequence ID" value="CAI97606.1"/>
    <property type="molecule type" value="Genomic_DNA"/>
</dbReference>
<dbReference type="SMR" id="Q1GAP7"/>
<dbReference type="STRING" id="390333.Ldb0779"/>
<dbReference type="KEGG" id="ldb:Ldb0779"/>
<dbReference type="PATRIC" id="fig|390333.13.peg.20"/>
<dbReference type="eggNOG" id="COG0218">
    <property type="taxonomic scope" value="Bacteria"/>
</dbReference>
<dbReference type="HOGENOM" id="CLU_033732_3_0_9"/>
<dbReference type="BioCyc" id="LDEL390333:LDB_RS03440-MONOMER"/>
<dbReference type="Proteomes" id="UP000001259">
    <property type="component" value="Chromosome"/>
</dbReference>
<dbReference type="GO" id="GO:0005829">
    <property type="term" value="C:cytosol"/>
    <property type="evidence" value="ECO:0007669"/>
    <property type="project" value="TreeGrafter"/>
</dbReference>
<dbReference type="GO" id="GO:0005525">
    <property type="term" value="F:GTP binding"/>
    <property type="evidence" value="ECO:0007669"/>
    <property type="project" value="UniProtKB-UniRule"/>
</dbReference>
<dbReference type="GO" id="GO:0046872">
    <property type="term" value="F:metal ion binding"/>
    <property type="evidence" value="ECO:0007669"/>
    <property type="project" value="UniProtKB-KW"/>
</dbReference>
<dbReference type="GO" id="GO:0000917">
    <property type="term" value="P:division septum assembly"/>
    <property type="evidence" value="ECO:0007669"/>
    <property type="project" value="UniProtKB-KW"/>
</dbReference>
<dbReference type="CDD" id="cd01876">
    <property type="entry name" value="YihA_EngB"/>
    <property type="match status" value="1"/>
</dbReference>
<dbReference type="FunFam" id="3.40.50.300:FF:000098">
    <property type="entry name" value="Probable GTP-binding protein EngB"/>
    <property type="match status" value="1"/>
</dbReference>
<dbReference type="Gene3D" id="3.40.50.300">
    <property type="entry name" value="P-loop containing nucleotide triphosphate hydrolases"/>
    <property type="match status" value="1"/>
</dbReference>
<dbReference type="HAMAP" id="MF_00321">
    <property type="entry name" value="GTPase_EngB"/>
    <property type="match status" value="1"/>
</dbReference>
<dbReference type="InterPro" id="IPR030393">
    <property type="entry name" value="G_ENGB_dom"/>
</dbReference>
<dbReference type="InterPro" id="IPR006073">
    <property type="entry name" value="GTP-bd"/>
</dbReference>
<dbReference type="InterPro" id="IPR019987">
    <property type="entry name" value="GTP-bd_ribosome_bio_YsxC"/>
</dbReference>
<dbReference type="InterPro" id="IPR027417">
    <property type="entry name" value="P-loop_NTPase"/>
</dbReference>
<dbReference type="InterPro" id="IPR005225">
    <property type="entry name" value="Small_GTP-bd"/>
</dbReference>
<dbReference type="NCBIfam" id="TIGR03598">
    <property type="entry name" value="GTPase_YsxC"/>
    <property type="match status" value="1"/>
</dbReference>
<dbReference type="NCBIfam" id="TIGR00231">
    <property type="entry name" value="small_GTP"/>
    <property type="match status" value="1"/>
</dbReference>
<dbReference type="PANTHER" id="PTHR11649:SF13">
    <property type="entry name" value="ENGB-TYPE G DOMAIN-CONTAINING PROTEIN"/>
    <property type="match status" value="1"/>
</dbReference>
<dbReference type="PANTHER" id="PTHR11649">
    <property type="entry name" value="MSS1/TRME-RELATED GTP-BINDING PROTEIN"/>
    <property type="match status" value="1"/>
</dbReference>
<dbReference type="Pfam" id="PF01926">
    <property type="entry name" value="MMR_HSR1"/>
    <property type="match status" value="1"/>
</dbReference>
<dbReference type="PRINTS" id="PR00449">
    <property type="entry name" value="RASTRNSFRMNG"/>
</dbReference>
<dbReference type="SUPFAM" id="SSF52540">
    <property type="entry name" value="P-loop containing nucleoside triphosphate hydrolases"/>
    <property type="match status" value="1"/>
</dbReference>
<dbReference type="PROSITE" id="PS51706">
    <property type="entry name" value="G_ENGB"/>
    <property type="match status" value="1"/>
</dbReference>
<keyword id="KW-0131">Cell cycle</keyword>
<keyword id="KW-0132">Cell division</keyword>
<keyword id="KW-0342">GTP-binding</keyword>
<keyword id="KW-0460">Magnesium</keyword>
<keyword id="KW-0479">Metal-binding</keyword>
<keyword id="KW-0547">Nucleotide-binding</keyword>
<keyword id="KW-1185">Reference proteome</keyword>
<keyword id="KW-0717">Septation</keyword>
<protein>
    <recommendedName>
        <fullName evidence="1">Probable GTP-binding protein EngB</fullName>
    </recommendedName>
</protein>
<comment type="function">
    <text evidence="1">Necessary for normal cell division and for the maintenance of normal septation.</text>
</comment>
<comment type="cofactor">
    <cofactor evidence="1">
        <name>Mg(2+)</name>
        <dbReference type="ChEBI" id="CHEBI:18420"/>
    </cofactor>
</comment>
<comment type="similarity">
    <text evidence="1">Belongs to the TRAFAC class TrmE-Era-EngA-EngB-Septin-like GTPase superfamily. EngB GTPase family.</text>
</comment>
<gene>
    <name evidence="1" type="primary">engB</name>
    <name type="ordered locus">Ldb0779</name>
</gene>
<proteinExistence type="inferred from homology"/>
<feature type="chain" id="PRO_0000266880" description="Probable GTP-binding protein EngB">
    <location>
        <begin position="1"/>
        <end position="200"/>
    </location>
</feature>
<feature type="domain" description="EngB-type G" evidence="1">
    <location>
        <begin position="22"/>
        <end position="199"/>
    </location>
</feature>
<feature type="binding site" evidence="1">
    <location>
        <begin position="30"/>
        <end position="37"/>
    </location>
    <ligand>
        <name>GTP</name>
        <dbReference type="ChEBI" id="CHEBI:37565"/>
    </ligand>
</feature>
<feature type="binding site" evidence="1">
    <location>
        <position position="37"/>
    </location>
    <ligand>
        <name>Mg(2+)</name>
        <dbReference type="ChEBI" id="CHEBI:18420"/>
    </ligand>
</feature>
<feature type="binding site" evidence="1">
    <location>
        <begin position="57"/>
        <end position="61"/>
    </location>
    <ligand>
        <name>GTP</name>
        <dbReference type="ChEBI" id="CHEBI:37565"/>
    </ligand>
</feature>
<feature type="binding site" evidence="1">
    <location>
        <position position="59"/>
    </location>
    <ligand>
        <name>Mg(2+)</name>
        <dbReference type="ChEBI" id="CHEBI:18420"/>
    </ligand>
</feature>
<feature type="binding site" evidence="1">
    <location>
        <begin position="78"/>
        <end position="81"/>
    </location>
    <ligand>
        <name>GTP</name>
        <dbReference type="ChEBI" id="CHEBI:37565"/>
    </ligand>
</feature>
<feature type="binding site" evidence="1">
    <location>
        <begin position="145"/>
        <end position="148"/>
    </location>
    <ligand>
        <name>GTP</name>
        <dbReference type="ChEBI" id="CHEBI:37565"/>
    </ligand>
</feature>
<feature type="binding site" evidence="1">
    <location>
        <begin position="178"/>
        <end position="180"/>
    </location>
    <ligand>
        <name>GTP</name>
        <dbReference type="ChEBI" id="CHEBI:37565"/>
    </ligand>
</feature>
<name>ENGB_LACDA</name>